<evidence type="ECO:0000250" key="1">
    <source>
        <dbReference type="UniProtKB" id="Q8WWI5"/>
    </source>
</evidence>
<evidence type="ECO:0000255" key="2"/>
<evidence type="ECO:0000256" key="3">
    <source>
        <dbReference type="SAM" id="MobiDB-lite"/>
    </source>
</evidence>
<evidence type="ECO:0000305" key="4"/>
<proteinExistence type="evidence at transcript level"/>
<reference key="1">
    <citation type="submission" date="2004-09" db="EMBL/GenBank/DDBJ databases">
        <authorList>
            <consortium name="NIH - Xenopus Gene Collection (XGC) project"/>
        </authorList>
    </citation>
    <scope>NUCLEOTIDE SEQUENCE [LARGE SCALE MRNA]</scope>
    <source>
        <tissue>Kidney</tissue>
        <tissue>Spleen</tissue>
    </source>
</reference>
<name>CTL1_XENLA</name>
<feature type="chain" id="PRO_0000359714" description="Choline transporter-like protein 1">
    <location>
        <begin position="1"/>
        <end position="651"/>
    </location>
</feature>
<feature type="topological domain" description="Cytoplasmic" evidence="2">
    <location>
        <begin position="1"/>
        <end position="25"/>
    </location>
</feature>
<feature type="transmembrane region" description="Helical" evidence="2">
    <location>
        <begin position="26"/>
        <end position="46"/>
    </location>
</feature>
<feature type="topological domain" description="Extracellular" evidence="2">
    <location>
        <begin position="47"/>
        <end position="208"/>
    </location>
</feature>
<feature type="transmembrane region" description="Helical" evidence="2">
    <location>
        <begin position="209"/>
        <end position="229"/>
    </location>
</feature>
<feature type="topological domain" description="Cytoplasmic" evidence="2">
    <location>
        <begin position="230"/>
        <end position="234"/>
    </location>
</feature>
<feature type="transmembrane region" description="Helical" evidence="2">
    <location>
        <begin position="235"/>
        <end position="255"/>
    </location>
</feature>
<feature type="topological domain" description="Extracellular" evidence="2">
    <location>
        <begin position="256"/>
        <end position="284"/>
    </location>
</feature>
<feature type="transmembrane region" description="Helical" evidence="2">
    <location>
        <begin position="285"/>
        <end position="305"/>
    </location>
</feature>
<feature type="topological domain" description="Cytoplasmic" evidence="2">
    <location>
        <begin position="306"/>
        <end position="311"/>
    </location>
</feature>
<feature type="transmembrane region" description="Helical" evidence="2">
    <location>
        <begin position="312"/>
        <end position="332"/>
    </location>
</feature>
<feature type="topological domain" description="Extracellular" evidence="2">
    <location>
        <begin position="333"/>
        <end position="334"/>
    </location>
</feature>
<feature type="transmembrane region" description="Helical" evidence="2">
    <location>
        <begin position="335"/>
        <end position="355"/>
    </location>
</feature>
<feature type="topological domain" description="Cytoplasmic" evidence="2">
    <location>
        <begin position="356"/>
        <end position="376"/>
    </location>
</feature>
<feature type="transmembrane region" description="Helical" evidence="2">
    <location>
        <begin position="377"/>
        <end position="397"/>
    </location>
</feature>
<feature type="topological domain" description="Extracellular" evidence="2">
    <location>
        <begin position="398"/>
        <end position="438"/>
    </location>
</feature>
<feature type="transmembrane region" description="Helical" evidence="2">
    <location>
        <begin position="439"/>
        <end position="459"/>
    </location>
</feature>
<feature type="topological domain" description="Cytoplasmic" evidence="2">
    <location>
        <begin position="460"/>
        <end position="533"/>
    </location>
</feature>
<feature type="transmembrane region" description="Helical" evidence="2">
    <location>
        <begin position="534"/>
        <end position="554"/>
    </location>
</feature>
<feature type="topological domain" description="Extracellular" evidence="2">
    <location>
        <begin position="555"/>
        <end position="562"/>
    </location>
</feature>
<feature type="transmembrane region" description="Helical" evidence="2">
    <location>
        <begin position="563"/>
        <end position="583"/>
    </location>
</feature>
<feature type="topological domain" description="Cytoplasmic" evidence="2">
    <location>
        <begin position="584"/>
        <end position="651"/>
    </location>
</feature>
<feature type="region of interest" description="Disordered" evidence="3">
    <location>
        <begin position="629"/>
        <end position="651"/>
    </location>
</feature>
<feature type="glycosylation site" description="N-linked (GlcNAc...) asparagine" evidence="2">
    <location>
        <position position="131"/>
    </location>
</feature>
<feature type="glycosylation site" description="N-linked (GlcNAc...) asparagine" evidence="2">
    <location>
        <position position="176"/>
    </location>
</feature>
<feature type="sequence conflict" description="In Ref. 1; AAH71026." evidence="4" ref="1">
    <original>R</original>
    <variation>Q</variation>
    <location>
        <position position="372"/>
    </location>
</feature>
<protein>
    <recommendedName>
        <fullName>Choline transporter-like protein 1</fullName>
    </recommendedName>
    <alternativeName>
        <fullName>Solute carrier family 44 member 1</fullName>
    </alternativeName>
</protein>
<comment type="function">
    <text evidence="1">Choline/H+ antiporter. Also acts as a high-affinity ethanolamine/H+ antiporter, regulating the supply of extracellular ethanolamine (Etn) for the CDP-Etn pathway, redistribute intracellular Etn and balance the CDP-Cho and CDP-Etn arms of the Kennedy pathway. Involved in membrane synthesis and myelin production.</text>
</comment>
<comment type="catalytic activity">
    <reaction evidence="1">
        <text>choline(out) + n H(+)(in) = choline(in) + n H(+)(out)</text>
        <dbReference type="Rhea" id="RHEA:75463"/>
        <dbReference type="ChEBI" id="CHEBI:15354"/>
        <dbReference type="ChEBI" id="CHEBI:15378"/>
    </reaction>
</comment>
<comment type="catalytic activity">
    <reaction evidence="1">
        <text>ethanolamine(out) + n H(+)(in) = ethanolamine(in) + n H(+)(out)</text>
        <dbReference type="Rhea" id="RHEA:75467"/>
        <dbReference type="ChEBI" id="CHEBI:15378"/>
        <dbReference type="ChEBI" id="CHEBI:57603"/>
    </reaction>
</comment>
<comment type="subcellular location">
    <subcellularLocation>
        <location evidence="1">Cell membrane</location>
        <topology evidence="1">Multi-pass membrane protein</topology>
    </subcellularLocation>
    <subcellularLocation>
        <location evidence="1">Mitochondrion outer membrane</location>
        <topology evidence="1">Multi-pass membrane protein</topology>
    </subcellularLocation>
</comment>
<comment type="similarity">
    <text evidence="4">Belongs to the CTL (choline transporter-like) family.</text>
</comment>
<sequence length="651" mass="72937">MGCCGSTQNSKRDWRPLEEHSCTDIPWLLLFILFCVGMGFICGFSIATGAASRLVFGYDSYGNICGQKNTKIEGFINSGLDHSNNKYVFFLDPCKLDLVNRKIKSIALCVSECPREELQTLNDVKKFAETNGSALCDYSLTPSQYTTDSRAPSLCPKLPVPKSAPIPFFHRCAPVNISCYAKFAEALITFVSDNSVLHRLISGVMTSKEIIMGLCLLSLVLSMILMVIIRYISRVLVWIITILVVLGSLGGTGVLWWLYADNKKSLNENLPPDQLQVSKDNLQALLVYAIAATVFTVILLLMMLIMRKRVALTIALFNVAGKVFIHLPLLVFQPFWTFFALLLFWVYWVMVLLFLGTAGDPFTNEQGFVEFRINGPLQYMWWYHLVGLIWISEFILACQQMTIAGAVVTYYFTRNKNDLPFTPILASVNRLIRYHLGTVAKGAFIITLVKIPRMILMYIHSQLKGKENACARCMLKSCICCLWCLEKCLAYLNQNAYTATAINSTNFCTSAKDALVILVENALRVAAINTVGDFMLFLGKILIVSCTGLAGIMLLNYQRDYTVWVLPLIIVCLFAFLVAHCFLSIYEMVVDVLFLCFAIDTKYNDGSPGKEFYMDKVLMEFVEDSRRALKEPGSTAEGRELKPMASGTSTA</sequence>
<gene>
    <name type="primary">slc44a1</name>
    <name type="synonym">ctl1</name>
</gene>
<accession>Q6IR74</accession>
<accession>Q63ZS3</accession>
<keyword id="KW-0050">Antiport</keyword>
<keyword id="KW-1003">Cell membrane</keyword>
<keyword id="KW-0325">Glycoprotein</keyword>
<keyword id="KW-0449">Lipoprotein</keyword>
<keyword id="KW-0472">Membrane</keyword>
<keyword id="KW-0496">Mitochondrion</keyword>
<keyword id="KW-1000">Mitochondrion outer membrane</keyword>
<keyword id="KW-0519">Myristate</keyword>
<keyword id="KW-0597">Phosphoprotein</keyword>
<keyword id="KW-1185">Reference proteome</keyword>
<keyword id="KW-0812">Transmembrane</keyword>
<keyword id="KW-1133">Transmembrane helix</keyword>
<keyword id="KW-0813">Transport</keyword>
<organism>
    <name type="scientific">Xenopus laevis</name>
    <name type="common">African clawed frog</name>
    <dbReference type="NCBI Taxonomy" id="8355"/>
    <lineage>
        <taxon>Eukaryota</taxon>
        <taxon>Metazoa</taxon>
        <taxon>Chordata</taxon>
        <taxon>Craniata</taxon>
        <taxon>Vertebrata</taxon>
        <taxon>Euteleostomi</taxon>
        <taxon>Amphibia</taxon>
        <taxon>Batrachia</taxon>
        <taxon>Anura</taxon>
        <taxon>Pipoidea</taxon>
        <taxon>Pipidae</taxon>
        <taxon>Xenopodinae</taxon>
        <taxon>Xenopus</taxon>
        <taxon>Xenopus</taxon>
    </lineage>
</organism>
<dbReference type="EMBL" id="BC071026">
    <property type="protein sequence ID" value="AAH71026.1"/>
    <property type="molecule type" value="mRNA"/>
</dbReference>
<dbReference type="EMBL" id="BC082837">
    <property type="protein sequence ID" value="AAH82837.1"/>
    <property type="molecule type" value="mRNA"/>
</dbReference>
<dbReference type="RefSeq" id="NP_001085247.1">
    <property type="nucleotide sequence ID" value="NM_001091778.1"/>
</dbReference>
<dbReference type="SMR" id="Q6IR74"/>
<dbReference type="GlyCosmos" id="Q6IR74">
    <property type="glycosylation" value="2 sites, No reported glycans"/>
</dbReference>
<dbReference type="DNASU" id="432345"/>
<dbReference type="GeneID" id="432345"/>
<dbReference type="KEGG" id="xla:432345"/>
<dbReference type="AGR" id="Xenbase:XB-GENE-984340"/>
<dbReference type="CTD" id="432345"/>
<dbReference type="Xenbase" id="XB-GENE-984340">
    <property type="gene designation" value="slc44a1.L"/>
</dbReference>
<dbReference type="OMA" id="GKSFCKA"/>
<dbReference type="OrthoDB" id="420519at2759"/>
<dbReference type="Proteomes" id="UP000186698">
    <property type="component" value="Chromosome 1L"/>
</dbReference>
<dbReference type="Bgee" id="432345">
    <property type="expression patterns" value="Expressed in egg cell and 19 other cell types or tissues"/>
</dbReference>
<dbReference type="GO" id="GO:0016020">
    <property type="term" value="C:membrane"/>
    <property type="evidence" value="ECO:0000318"/>
    <property type="project" value="GO_Central"/>
</dbReference>
<dbReference type="GO" id="GO:0005741">
    <property type="term" value="C:mitochondrial outer membrane"/>
    <property type="evidence" value="ECO:0000250"/>
    <property type="project" value="UniProtKB"/>
</dbReference>
<dbReference type="GO" id="GO:0005886">
    <property type="term" value="C:plasma membrane"/>
    <property type="evidence" value="ECO:0000250"/>
    <property type="project" value="UniProtKB"/>
</dbReference>
<dbReference type="GO" id="GO:0015297">
    <property type="term" value="F:antiporter activity"/>
    <property type="evidence" value="ECO:0007669"/>
    <property type="project" value="UniProtKB-KW"/>
</dbReference>
<dbReference type="GO" id="GO:0015220">
    <property type="term" value="F:choline transmembrane transporter activity"/>
    <property type="evidence" value="ECO:0000250"/>
    <property type="project" value="UniProtKB"/>
</dbReference>
<dbReference type="GO" id="GO:0034228">
    <property type="term" value="F:ethanolamine transmembrane transporter activity"/>
    <property type="evidence" value="ECO:0000250"/>
    <property type="project" value="UniProtKB"/>
</dbReference>
<dbReference type="GO" id="GO:0022857">
    <property type="term" value="F:transmembrane transporter activity"/>
    <property type="evidence" value="ECO:0000318"/>
    <property type="project" value="GO_Central"/>
</dbReference>
<dbReference type="GO" id="GO:0015871">
    <property type="term" value="P:choline transport"/>
    <property type="evidence" value="ECO:0000250"/>
    <property type="project" value="UniProtKB"/>
</dbReference>
<dbReference type="GO" id="GO:0034229">
    <property type="term" value="P:ethanolamine transport"/>
    <property type="evidence" value="ECO:0000250"/>
    <property type="project" value="UniProtKB"/>
</dbReference>
<dbReference type="GO" id="GO:0055085">
    <property type="term" value="P:transmembrane transport"/>
    <property type="evidence" value="ECO:0000318"/>
    <property type="project" value="GO_Central"/>
</dbReference>
<dbReference type="InterPro" id="IPR007603">
    <property type="entry name" value="Choline_transptr-like"/>
</dbReference>
<dbReference type="PANTHER" id="PTHR12385">
    <property type="entry name" value="CHOLINE TRANSPORTER-LIKE (SLC FAMILY 44)"/>
    <property type="match status" value="1"/>
</dbReference>
<dbReference type="PANTHER" id="PTHR12385:SF56">
    <property type="entry name" value="CHOLINE TRANSPORTER-LIKE PROTEIN 1"/>
    <property type="match status" value="1"/>
</dbReference>
<dbReference type="Pfam" id="PF04515">
    <property type="entry name" value="Choline_transpo"/>
    <property type="match status" value="1"/>
</dbReference>